<reference key="1">
    <citation type="journal article" date="2008" name="J. Bacteriol.">
        <title>The complete genome sequence of Actinobacillus pleuropneumoniae L20 (serotype 5b).</title>
        <authorList>
            <person name="Foote S.J."/>
            <person name="Bosse J.T."/>
            <person name="Bouevitch A.B."/>
            <person name="Langford P.R."/>
            <person name="Young N.M."/>
            <person name="Nash J.H.E."/>
        </authorList>
    </citation>
    <scope>NUCLEOTIDE SEQUENCE [LARGE SCALE GENOMIC DNA]</scope>
    <source>
        <strain>L20</strain>
    </source>
</reference>
<evidence type="ECO:0000255" key="1">
    <source>
        <dbReference type="HAMAP-Rule" id="MF_01343"/>
    </source>
</evidence>
<evidence type="ECO:0000305" key="2"/>
<gene>
    <name evidence="1" type="primary">rpsO</name>
    <name type="ordered locus">APL_1005</name>
</gene>
<organism>
    <name type="scientific">Actinobacillus pleuropneumoniae serotype 5b (strain L20)</name>
    <dbReference type="NCBI Taxonomy" id="416269"/>
    <lineage>
        <taxon>Bacteria</taxon>
        <taxon>Pseudomonadati</taxon>
        <taxon>Pseudomonadota</taxon>
        <taxon>Gammaproteobacteria</taxon>
        <taxon>Pasteurellales</taxon>
        <taxon>Pasteurellaceae</taxon>
        <taxon>Actinobacillus</taxon>
    </lineage>
</organism>
<proteinExistence type="inferred from homology"/>
<feature type="chain" id="PRO_1000054741" description="Small ribosomal subunit protein uS15">
    <location>
        <begin position="1"/>
        <end position="89"/>
    </location>
</feature>
<sequence length="89" mass="10180">MSLSVEAKAKIVAEFGRDAKDTGSSEVQIALLTAQINHLQAHFAEHKKDHHGRRGLLRMVSRRRKLLDYLKRTDLAKYSETIARLGLRR</sequence>
<name>RS15_ACTP2</name>
<accession>A3N113</accession>
<keyword id="KW-1185">Reference proteome</keyword>
<keyword id="KW-0687">Ribonucleoprotein</keyword>
<keyword id="KW-0689">Ribosomal protein</keyword>
<keyword id="KW-0694">RNA-binding</keyword>
<keyword id="KW-0699">rRNA-binding</keyword>
<dbReference type="EMBL" id="CP000569">
    <property type="protein sequence ID" value="ABN74099.1"/>
    <property type="molecule type" value="Genomic_DNA"/>
</dbReference>
<dbReference type="RefSeq" id="WP_005597777.1">
    <property type="nucleotide sequence ID" value="NC_009053.1"/>
</dbReference>
<dbReference type="SMR" id="A3N113"/>
<dbReference type="STRING" id="416269.APL_1005"/>
<dbReference type="EnsemblBacteria" id="ABN74099">
    <property type="protein sequence ID" value="ABN74099"/>
    <property type="gene ID" value="APL_1005"/>
</dbReference>
<dbReference type="GeneID" id="67368470"/>
<dbReference type="KEGG" id="apl:APL_1005"/>
<dbReference type="eggNOG" id="COG0184">
    <property type="taxonomic scope" value="Bacteria"/>
</dbReference>
<dbReference type="HOGENOM" id="CLU_148518_0_0_6"/>
<dbReference type="Proteomes" id="UP000001432">
    <property type="component" value="Chromosome"/>
</dbReference>
<dbReference type="GO" id="GO:0022627">
    <property type="term" value="C:cytosolic small ribosomal subunit"/>
    <property type="evidence" value="ECO:0007669"/>
    <property type="project" value="TreeGrafter"/>
</dbReference>
<dbReference type="GO" id="GO:0019843">
    <property type="term" value="F:rRNA binding"/>
    <property type="evidence" value="ECO:0007669"/>
    <property type="project" value="UniProtKB-UniRule"/>
</dbReference>
<dbReference type="GO" id="GO:0003735">
    <property type="term" value="F:structural constituent of ribosome"/>
    <property type="evidence" value="ECO:0007669"/>
    <property type="project" value="InterPro"/>
</dbReference>
<dbReference type="GO" id="GO:0006412">
    <property type="term" value="P:translation"/>
    <property type="evidence" value="ECO:0007669"/>
    <property type="project" value="UniProtKB-UniRule"/>
</dbReference>
<dbReference type="CDD" id="cd00353">
    <property type="entry name" value="Ribosomal_S15p_S13e"/>
    <property type="match status" value="1"/>
</dbReference>
<dbReference type="FunFam" id="1.10.287.10:FF:000002">
    <property type="entry name" value="30S ribosomal protein S15"/>
    <property type="match status" value="1"/>
</dbReference>
<dbReference type="Gene3D" id="6.10.250.3130">
    <property type="match status" value="1"/>
</dbReference>
<dbReference type="Gene3D" id="1.10.287.10">
    <property type="entry name" value="S15/NS1, RNA-binding"/>
    <property type="match status" value="1"/>
</dbReference>
<dbReference type="HAMAP" id="MF_01343_B">
    <property type="entry name" value="Ribosomal_uS15_B"/>
    <property type="match status" value="1"/>
</dbReference>
<dbReference type="InterPro" id="IPR000589">
    <property type="entry name" value="Ribosomal_uS15"/>
</dbReference>
<dbReference type="InterPro" id="IPR005290">
    <property type="entry name" value="Ribosomal_uS15_bac-type"/>
</dbReference>
<dbReference type="InterPro" id="IPR009068">
    <property type="entry name" value="uS15_NS1_RNA-bd_sf"/>
</dbReference>
<dbReference type="NCBIfam" id="TIGR00952">
    <property type="entry name" value="S15_bact"/>
    <property type="match status" value="1"/>
</dbReference>
<dbReference type="PANTHER" id="PTHR23321">
    <property type="entry name" value="RIBOSOMAL PROTEIN S15, BACTERIAL AND ORGANELLAR"/>
    <property type="match status" value="1"/>
</dbReference>
<dbReference type="PANTHER" id="PTHR23321:SF26">
    <property type="entry name" value="SMALL RIBOSOMAL SUBUNIT PROTEIN US15M"/>
    <property type="match status" value="1"/>
</dbReference>
<dbReference type="Pfam" id="PF00312">
    <property type="entry name" value="Ribosomal_S15"/>
    <property type="match status" value="1"/>
</dbReference>
<dbReference type="SMART" id="SM01387">
    <property type="entry name" value="Ribosomal_S15"/>
    <property type="match status" value="1"/>
</dbReference>
<dbReference type="SUPFAM" id="SSF47060">
    <property type="entry name" value="S15/NS1 RNA-binding domain"/>
    <property type="match status" value="1"/>
</dbReference>
<dbReference type="PROSITE" id="PS00362">
    <property type="entry name" value="RIBOSOMAL_S15"/>
    <property type="match status" value="1"/>
</dbReference>
<protein>
    <recommendedName>
        <fullName evidence="1">Small ribosomal subunit protein uS15</fullName>
    </recommendedName>
    <alternativeName>
        <fullName evidence="2">30S ribosomal protein S15</fullName>
    </alternativeName>
</protein>
<comment type="function">
    <text evidence="1">One of the primary rRNA binding proteins, it binds directly to 16S rRNA where it helps nucleate assembly of the platform of the 30S subunit by binding and bridging several RNA helices of the 16S rRNA.</text>
</comment>
<comment type="function">
    <text evidence="1">Forms an intersubunit bridge (bridge B4) with the 23S rRNA of the 50S subunit in the ribosome.</text>
</comment>
<comment type="subunit">
    <text evidence="1">Part of the 30S ribosomal subunit. Forms a bridge to the 50S subunit in the 70S ribosome, contacting the 23S rRNA.</text>
</comment>
<comment type="similarity">
    <text evidence="1">Belongs to the universal ribosomal protein uS15 family.</text>
</comment>